<reference key="1">
    <citation type="journal article" date="2009" name="J. Bacteriol.">
        <title>Complete genome sequence of Rhodobacter sphaeroides KD131.</title>
        <authorList>
            <person name="Lim S.-K."/>
            <person name="Kim S.J."/>
            <person name="Cha S.H."/>
            <person name="Oh Y.-K."/>
            <person name="Rhee H.-J."/>
            <person name="Kim M.-S."/>
            <person name="Lee J.K."/>
        </authorList>
    </citation>
    <scope>NUCLEOTIDE SEQUENCE [LARGE SCALE GENOMIC DNA]</scope>
    <source>
        <strain>KD131 / KCTC 12085</strain>
    </source>
</reference>
<protein>
    <recommendedName>
        <fullName evidence="1">Large ribosomal subunit protein bL31</fullName>
    </recommendedName>
    <alternativeName>
        <fullName evidence="2">50S ribosomal protein L31</fullName>
    </alternativeName>
</protein>
<gene>
    <name evidence="1" type="primary">rpmE</name>
    <name type="ordered locus">RSKD131_2437</name>
</gene>
<organism>
    <name type="scientific">Cereibacter sphaeroides (strain KD131 / KCTC 12085)</name>
    <name type="common">Rhodobacter sphaeroides</name>
    <dbReference type="NCBI Taxonomy" id="557760"/>
    <lineage>
        <taxon>Bacteria</taxon>
        <taxon>Pseudomonadati</taxon>
        <taxon>Pseudomonadota</taxon>
        <taxon>Alphaproteobacteria</taxon>
        <taxon>Rhodobacterales</taxon>
        <taxon>Paracoccaceae</taxon>
        <taxon>Cereibacter</taxon>
    </lineage>
</organism>
<comment type="function">
    <text evidence="1">Binds the 23S rRNA.</text>
</comment>
<comment type="subunit">
    <text evidence="1">Part of the 50S ribosomal subunit.</text>
</comment>
<comment type="similarity">
    <text evidence="1">Belongs to the bacterial ribosomal protein bL31 family. Type A subfamily.</text>
</comment>
<proteinExistence type="inferred from homology"/>
<name>RL31_CERSK</name>
<dbReference type="EMBL" id="CP001150">
    <property type="protein sequence ID" value="ACM02297.1"/>
    <property type="molecule type" value="Genomic_DNA"/>
</dbReference>
<dbReference type="RefSeq" id="WP_002721385.1">
    <property type="nucleotide sequence ID" value="NC_011963.1"/>
</dbReference>
<dbReference type="SMR" id="B9KNX5"/>
<dbReference type="GeneID" id="67447816"/>
<dbReference type="KEGG" id="rsk:RSKD131_2437"/>
<dbReference type="HOGENOM" id="CLU_114306_3_2_5"/>
<dbReference type="GO" id="GO:1990904">
    <property type="term" value="C:ribonucleoprotein complex"/>
    <property type="evidence" value="ECO:0007669"/>
    <property type="project" value="UniProtKB-KW"/>
</dbReference>
<dbReference type="GO" id="GO:0005840">
    <property type="term" value="C:ribosome"/>
    <property type="evidence" value="ECO:0007669"/>
    <property type="project" value="UniProtKB-KW"/>
</dbReference>
<dbReference type="GO" id="GO:0019843">
    <property type="term" value="F:rRNA binding"/>
    <property type="evidence" value="ECO:0007669"/>
    <property type="project" value="UniProtKB-KW"/>
</dbReference>
<dbReference type="GO" id="GO:0003735">
    <property type="term" value="F:structural constituent of ribosome"/>
    <property type="evidence" value="ECO:0007669"/>
    <property type="project" value="InterPro"/>
</dbReference>
<dbReference type="GO" id="GO:0006412">
    <property type="term" value="P:translation"/>
    <property type="evidence" value="ECO:0007669"/>
    <property type="project" value="UniProtKB-UniRule"/>
</dbReference>
<dbReference type="Gene3D" id="4.10.830.30">
    <property type="entry name" value="Ribosomal protein L31"/>
    <property type="match status" value="1"/>
</dbReference>
<dbReference type="HAMAP" id="MF_00501">
    <property type="entry name" value="Ribosomal_bL31_1"/>
    <property type="match status" value="1"/>
</dbReference>
<dbReference type="InterPro" id="IPR034704">
    <property type="entry name" value="Ribosomal_bL28/bL31-like_sf"/>
</dbReference>
<dbReference type="InterPro" id="IPR002150">
    <property type="entry name" value="Ribosomal_bL31"/>
</dbReference>
<dbReference type="InterPro" id="IPR027491">
    <property type="entry name" value="Ribosomal_bL31_A"/>
</dbReference>
<dbReference type="InterPro" id="IPR042105">
    <property type="entry name" value="Ribosomal_bL31_sf"/>
</dbReference>
<dbReference type="NCBIfam" id="TIGR00105">
    <property type="entry name" value="L31"/>
    <property type="match status" value="1"/>
</dbReference>
<dbReference type="NCBIfam" id="NF001809">
    <property type="entry name" value="PRK00528.1"/>
    <property type="match status" value="1"/>
</dbReference>
<dbReference type="PANTHER" id="PTHR33280">
    <property type="entry name" value="50S RIBOSOMAL PROTEIN L31, CHLOROPLASTIC"/>
    <property type="match status" value="1"/>
</dbReference>
<dbReference type="PANTHER" id="PTHR33280:SF6">
    <property type="entry name" value="LARGE RIBOSOMAL SUBUNIT PROTEIN BL31A"/>
    <property type="match status" value="1"/>
</dbReference>
<dbReference type="Pfam" id="PF01197">
    <property type="entry name" value="Ribosomal_L31"/>
    <property type="match status" value="1"/>
</dbReference>
<dbReference type="PRINTS" id="PR01249">
    <property type="entry name" value="RIBOSOMALL31"/>
</dbReference>
<dbReference type="SUPFAM" id="SSF143800">
    <property type="entry name" value="L28p-like"/>
    <property type="match status" value="1"/>
</dbReference>
<dbReference type="PROSITE" id="PS01143">
    <property type="entry name" value="RIBOSOMAL_L31"/>
    <property type="match status" value="1"/>
</dbReference>
<keyword id="KW-0687">Ribonucleoprotein</keyword>
<keyword id="KW-0689">Ribosomal protein</keyword>
<keyword id="KW-0694">RNA-binding</keyword>
<keyword id="KW-0699">rRNA-binding</keyword>
<sequence>MKKGIHPDYHMIDVKMTDGTVFQIRSTWGKEGEQMALEIDPLAHPAWTGGTAKLMDTGGRVSKFKNKYAGLGF</sequence>
<accession>B9KNX5</accession>
<feature type="chain" id="PRO_1000176973" description="Large ribosomal subunit protein bL31">
    <location>
        <begin position="1"/>
        <end position="73"/>
    </location>
</feature>
<evidence type="ECO:0000255" key="1">
    <source>
        <dbReference type="HAMAP-Rule" id="MF_00501"/>
    </source>
</evidence>
<evidence type="ECO:0000305" key="2"/>